<comment type="function">
    <text evidence="6 8 9">RuBisCO catalyzes two reactions: the carboxylation of D-ribulose 1,5-bisphosphate, the primary event in carbon dioxide fixation, as well as the oxidative fragmentation of the pentose substrate in the photorespiration process. Both reactions occur simultaneously and in competition at the same active site (Probable). Binds to abscisic acid (ABA); only half of the possible binding sites are occupied in the crystal and there are indications this is a low affinity site (PubMed:26197050).</text>
</comment>
<comment type="catalytic activity">
    <reaction evidence="3 8 9">
        <text>2 (2R)-3-phosphoglycerate + 2 H(+) = D-ribulose 1,5-bisphosphate + CO2 + H2O</text>
        <dbReference type="Rhea" id="RHEA:23124"/>
        <dbReference type="ChEBI" id="CHEBI:15377"/>
        <dbReference type="ChEBI" id="CHEBI:15378"/>
        <dbReference type="ChEBI" id="CHEBI:16526"/>
        <dbReference type="ChEBI" id="CHEBI:57870"/>
        <dbReference type="ChEBI" id="CHEBI:58272"/>
        <dbReference type="EC" id="4.1.1.39"/>
    </reaction>
</comment>
<comment type="catalytic activity">
    <reaction evidence="3 8 9">
        <text>D-ribulose 1,5-bisphosphate + O2 = 2-phosphoglycolate + (2R)-3-phosphoglycerate + 2 H(+)</text>
        <dbReference type="Rhea" id="RHEA:36631"/>
        <dbReference type="ChEBI" id="CHEBI:15378"/>
        <dbReference type="ChEBI" id="CHEBI:15379"/>
        <dbReference type="ChEBI" id="CHEBI:57870"/>
        <dbReference type="ChEBI" id="CHEBI:58033"/>
        <dbReference type="ChEBI" id="CHEBI:58272"/>
    </reaction>
</comment>
<comment type="cofactor">
    <cofactor evidence="3">
        <name>Mg(2+)</name>
        <dbReference type="ChEBI" id="CHEBI:18420"/>
    </cofactor>
    <text evidence="3">Binds 1 Mg(2+) ion per subunit.</text>
</comment>
<comment type="subunit">
    <text evidence="5 6">Heterohexadecamer of 8 large chains and 8 small chains (PubMed:23295478). Heterohexadecamer; disulfide-linked. The disulfide link is formed within the large subunit homodimers (PubMed:26197050).</text>
</comment>
<comment type="subcellular location">
    <subcellularLocation>
        <location evidence="3">Plastid</location>
        <location evidence="3">Chloroplast</location>
    </subcellularLocation>
</comment>
<comment type="PTM">
    <text evidence="2">The disulfide bond which can form in the large chain dimeric partners within the hexadecamer appears to be associated with oxidative stress and protein turnover.</text>
</comment>
<comment type="miscellaneous">
    <text evidence="3 5 6">The basic functional RuBisCO is composed of a large chain homodimer in a 'head-to-tail' conformation. In form I RuBisCO this homodimer is arranged in a barrel-like tetramer with the small subunits forming a tetrameric 'cap' on each end of the 'barrel'.</text>
</comment>
<comment type="similarity">
    <text evidence="3">Belongs to the RuBisCO large chain family. Type I subfamily.</text>
</comment>
<comment type="sequence caution" evidence="7">
    <conflict type="erroneous initiation">
        <sequence resource="EMBL-CDS" id="CAA27483"/>
    </conflict>
    <text>Extended N-terminus.</text>
</comment>
<name>RBL_PEA</name>
<organism>
    <name type="scientific">Pisum sativum</name>
    <name type="common">Garden pea</name>
    <name type="synonym">Lathyrus oleraceus</name>
    <dbReference type="NCBI Taxonomy" id="3888"/>
    <lineage>
        <taxon>Eukaryota</taxon>
        <taxon>Viridiplantae</taxon>
        <taxon>Streptophyta</taxon>
        <taxon>Embryophyta</taxon>
        <taxon>Tracheophyta</taxon>
        <taxon>Spermatophyta</taxon>
        <taxon>Magnoliopsida</taxon>
        <taxon>eudicotyledons</taxon>
        <taxon>Gunneridae</taxon>
        <taxon>Pentapetalae</taxon>
        <taxon>rosids</taxon>
        <taxon>fabids</taxon>
        <taxon>Fabales</taxon>
        <taxon>Fabaceae</taxon>
        <taxon>Papilionoideae</taxon>
        <taxon>50 kb inversion clade</taxon>
        <taxon>NPAAA clade</taxon>
        <taxon>Hologalegina</taxon>
        <taxon>IRL clade</taxon>
        <taxon>Fabeae</taxon>
        <taxon>Pisum</taxon>
    </lineage>
</organism>
<gene>
    <name evidence="3" type="primary">rbcL</name>
</gene>
<dbReference type="EC" id="4.1.1.39" evidence="3"/>
<dbReference type="EMBL" id="X03853">
    <property type="protein sequence ID" value="CAA27483.1"/>
    <property type="status" value="ALT_INIT"/>
    <property type="molecule type" value="Genomic_DNA"/>
</dbReference>
<dbReference type="PIR" id="A24471">
    <property type="entry name" value="RKPMLC"/>
</dbReference>
<dbReference type="RefSeq" id="YP_003587524.1">
    <property type="nucleotide sequence ID" value="NC_014057.1"/>
</dbReference>
<dbReference type="PDB" id="4HHH">
    <property type="method" value="X-ray"/>
    <property type="resolution" value="2.20 A"/>
    <property type="chains" value="A/B/C/D=1-475"/>
</dbReference>
<dbReference type="PDB" id="4MKV">
    <property type="method" value="X-ray"/>
    <property type="resolution" value="2.15 A"/>
    <property type="chains" value="A/B/C/D=12-469"/>
</dbReference>
<dbReference type="PDBsum" id="4HHH"/>
<dbReference type="PDBsum" id="4MKV"/>
<dbReference type="SMR" id="P04717"/>
<dbReference type="iPTMnet" id="P04717"/>
<dbReference type="GeneID" id="9073048"/>
<dbReference type="BRENDA" id="4.1.1.39">
    <property type="organism ID" value="4872"/>
</dbReference>
<dbReference type="EvolutionaryTrace" id="P04717"/>
<dbReference type="GO" id="GO:0009507">
    <property type="term" value="C:chloroplast"/>
    <property type="evidence" value="ECO:0007669"/>
    <property type="project" value="UniProtKB-SubCell"/>
</dbReference>
<dbReference type="GO" id="GO:0000287">
    <property type="term" value="F:magnesium ion binding"/>
    <property type="evidence" value="ECO:0007669"/>
    <property type="project" value="UniProtKB-UniRule"/>
</dbReference>
<dbReference type="GO" id="GO:0004497">
    <property type="term" value="F:monooxygenase activity"/>
    <property type="evidence" value="ECO:0007669"/>
    <property type="project" value="UniProtKB-KW"/>
</dbReference>
<dbReference type="GO" id="GO:0016984">
    <property type="term" value="F:ribulose-bisphosphate carboxylase activity"/>
    <property type="evidence" value="ECO:0007669"/>
    <property type="project" value="UniProtKB-UniRule"/>
</dbReference>
<dbReference type="GO" id="GO:0009853">
    <property type="term" value="P:photorespiration"/>
    <property type="evidence" value="ECO:0007669"/>
    <property type="project" value="UniProtKB-KW"/>
</dbReference>
<dbReference type="GO" id="GO:0019253">
    <property type="term" value="P:reductive pentose-phosphate cycle"/>
    <property type="evidence" value="ECO:0007669"/>
    <property type="project" value="UniProtKB-UniRule"/>
</dbReference>
<dbReference type="CDD" id="cd08212">
    <property type="entry name" value="RuBisCO_large_I"/>
    <property type="match status" value="1"/>
</dbReference>
<dbReference type="FunFam" id="3.20.20.110:FF:000001">
    <property type="entry name" value="Ribulose bisphosphate carboxylase large chain"/>
    <property type="match status" value="1"/>
</dbReference>
<dbReference type="FunFam" id="3.30.70.150:FF:000001">
    <property type="entry name" value="Ribulose bisphosphate carboxylase large chain"/>
    <property type="match status" value="1"/>
</dbReference>
<dbReference type="Gene3D" id="3.20.20.110">
    <property type="entry name" value="Ribulose bisphosphate carboxylase, large subunit, C-terminal domain"/>
    <property type="match status" value="1"/>
</dbReference>
<dbReference type="Gene3D" id="3.30.70.150">
    <property type="entry name" value="RuBisCO large subunit, N-terminal domain"/>
    <property type="match status" value="1"/>
</dbReference>
<dbReference type="HAMAP" id="MF_01338">
    <property type="entry name" value="RuBisCO_L_type1"/>
    <property type="match status" value="1"/>
</dbReference>
<dbReference type="InterPro" id="IPR033966">
    <property type="entry name" value="RuBisCO"/>
</dbReference>
<dbReference type="InterPro" id="IPR020878">
    <property type="entry name" value="RuBisCo_large_chain_AS"/>
</dbReference>
<dbReference type="InterPro" id="IPR000685">
    <property type="entry name" value="RuBisCO_lsu_C"/>
</dbReference>
<dbReference type="InterPro" id="IPR036376">
    <property type="entry name" value="RuBisCO_lsu_C_sf"/>
</dbReference>
<dbReference type="InterPro" id="IPR017443">
    <property type="entry name" value="RuBisCO_lsu_fd_N"/>
</dbReference>
<dbReference type="InterPro" id="IPR036422">
    <property type="entry name" value="RuBisCO_lsu_N_sf"/>
</dbReference>
<dbReference type="InterPro" id="IPR020888">
    <property type="entry name" value="RuBisCO_lsuI"/>
</dbReference>
<dbReference type="NCBIfam" id="NF003252">
    <property type="entry name" value="PRK04208.1"/>
    <property type="match status" value="1"/>
</dbReference>
<dbReference type="PANTHER" id="PTHR42704">
    <property type="entry name" value="RIBULOSE BISPHOSPHATE CARBOXYLASE"/>
    <property type="match status" value="1"/>
</dbReference>
<dbReference type="PANTHER" id="PTHR42704:SF15">
    <property type="entry name" value="RIBULOSE BISPHOSPHATE CARBOXYLASE LARGE CHAIN"/>
    <property type="match status" value="1"/>
</dbReference>
<dbReference type="Pfam" id="PF00016">
    <property type="entry name" value="RuBisCO_large"/>
    <property type="match status" value="1"/>
</dbReference>
<dbReference type="Pfam" id="PF02788">
    <property type="entry name" value="RuBisCO_large_N"/>
    <property type="match status" value="1"/>
</dbReference>
<dbReference type="SFLD" id="SFLDG01052">
    <property type="entry name" value="RuBisCO"/>
    <property type="match status" value="1"/>
</dbReference>
<dbReference type="SFLD" id="SFLDS00014">
    <property type="entry name" value="RuBisCO"/>
    <property type="match status" value="1"/>
</dbReference>
<dbReference type="SFLD" id="SFLDG00301">
    <property type="entry name" value="RuBisCO-like_proteins"/>
    <property type="match status" value="1"/>
</dbReference>
<dbReference type="SUPFAM" id="SSF51649">
    <property type="entry name" value="RuBisCo, C-terminal domain"/>
    <property type="match status" value="1"/>
</dbReference>
<dbReference type="SUPFAM" id="SSF54966">
    <property type="entry name" value="RuBisCO, large subunit, small (N-terminal) domain"/>
    <property type="match status" value="1"/>
</dbReference>
<dbReference type="PROSITE" id="PS00157">
    <property type="entry name" value="RUBISCO_LARGE"/>
    <property type="match status" value="1"/>
</dbReference>
<geneLocation type="chloroplast"/>
<reference key="1">
    <citation type="journal article" date="1986" name="Nucleic Acids Res.">
        <title>Sequence of the gene for the large subunit of ribulose 1,5-bisphosphate carboxylase from pea chloroplasts.</title>
        <authorList>
            <person name="Zurawski G."/>
            <person name="Whitfeld P.R."/>
            <person name="Bottomley W."/>
        </authorList>
    </citation>
    <scope>NUCLEOTIDE SEQUENCE [GENOMIC DNA]</scope>
</reference>
<reference key="2">
    <citation type="journal article" date="1992" name="Plant Physiol.">
        <title>Posttranslational modifications in the amino-terminal region of the large subunit of ribulose-1,5-bisphosphate carboxylase/oxygenase from several plant species.</title>
        <authorList>
            <person name="Houtz R.L."/>
            <person name="Poneleit L."/>
            <person name="Jones S.B."/>
            <person name="Royer M."/>
            <person name="Stults J.T."/>
        </authorList>
    </citation>
    <scope>PROTEIN SEQUENCE OF 3-18</scope>
    <scope>METHYLATION AT LYS-14</scope>
    <scope>ACETYLATION AT PRO-3</scope>
</reference>
<reference evidence="10" key="3">
    <citation type="journal article" date="2013" name="Acta Crystallogr. F">
        <title>Structure of Pisum sativum Rubisco with bound ribulose 1,5-bisphosphate.</title>
        <authorList>
            <person name="Loewen P.C."/>
            <person name="Didychuk A.L."/>
            <person name="Switala J."/>
            <person name="Perez-Luque R."/>
            <person name="Fita I."/>
            <person name="Loewen M.C."/>
        </authorList>
    </citation>
    <scope>X-RAY CRYSTALLOGRAPHY (2.20 ANGSTROMS) OF INACTIVE HOLOENZYME IN COMPLEX WITH RIBULOSE 1,5-BISPHOSPHATE</scope>
    <scope>SUBUNIT</scope>
</reference>
<reference evidence="11" key="4">
    <citation type="journal article" date="2015" name="PLoS ONE">
        <title>Identification of Interactions between Abscisic Acid and Ribulose-1,5-Bisphosphate Carboxylase/Oxygenase.</title>
        <authorList>
            <person name="Galka M.M."/>
            <person name="Rajagopalan N."/>
            <person name="Buhrow L.M."/>
            <person name="Nelson K.M."/>
            <person name="Switala J."/>
            <person name="Cutler A.J."/>
            <person name="Palmer D.R."/>
            <person name="Loewen P.C."/>
            <person name="Abrams S.R."/>
            <person name="Loewen M.C."/>
        </authorList>
    </citation>
    <scope>X-RAY CRYSTALLOGRAPHY (2.15 ANGSTROMS) OF 12-469 OF INACTIVE HOLOENZYME IN COMPLEX WITH RIBULOSE 1,5-BISPHOSPHATE AND ABSCISIC ACID</scope>
    <scope>SUBUNIT</scope>
    <scope>DISULFIDE BOND</scope>
</reference>
<keyword id="KW-0002">3D-structure</keyword>
<keyword id="KW-0007">Acetylation</keyword>
<keyword id="KW-0113">Calvin cycle</keyword>
<keyword id="KW-0120">Carbon dioxide fixation</keyword>
<keyword id="KW-0150">Chloroplast</keyword>
<keyword id="KW-0903">Direct protein sequencing</keyword>
<keyword id="KW-1015">Disulfide bond</keyword>
<keyword id="KW-0456">Lyase</keyword>
<keyword id="KW-0460">Magnesium</keyword>
<keyword id="KW-0479">Metal-binding</keyword>
<keyword id="KW-0488">Methylation</keyword>
<keyword id="KW-0503">Monooxygenase</keyword>
<keyword id="KW-0560">Oxidoreductase</keyword>
<keyword id="KW-0601">Photorespiration</keyword>
<keyword id="KW-0602">Photosynthesis</keyword>
<keyword id="KW-0934">Plastid</keyword>
<protein>
    <recommendedName>
        <fullName evidence="3">Ribulose bisphosphate carboxylase large chain</fullName>
        <shortName evidence="3">RuBisCO large subunit</shortName>
        <ecNumber evidence="3">4.1.1.39</ecNumber>
    </recommendedName>
</protein>
<accession>P04717</accession>
<feature type="propeptide" id="PRO_0000031333" evidence="4">
    <location>
        <begin position="1"/>
        <end position="2"/>
    </location>
</feature>
<feature type="chain" id="PRO_0000031334" description="Ribulose bisphosphate carboxylase large chain">
    <location>
        <begin position="3"/>
        <end position="475"/>
    </location>
</feature>
<feature type="active site" description="Proton acceptor" evidence="1">
    <location>
        <position position="175"/>
    </location>
</feature>
<feature type="active site" description="Proton acceptor" evidence="1">
    <location>
        <position position="294"/>
    </location>
</feature>
<feature type="binding site" evidence="6 11">
    <location>
        <position position="175"/>
    </location>
    <ligand>
        <name>D-ribulose 1,5-bisphosphate</name>
        <dbReference type="ChEBI" id="CHEBI:57870"/>
    </ligand>
</feature>
<feature type="binding site" evidence="6 11">
    <location>
        <position position="177"/>
    </location>
    <ligand>
        <name>D-ribulose 1,5-bisphosphate</name>
        <dbReference type="ChEBI" id="CHEBI:57870"/>
    </ligand>
</feature>
<feature type="binding site" description="via carbamate group" evidence="1">
    <location>
        <position position="201"/>
    </location>
    <ligand>
        <name>Mg(2+)</name>
        <dbReference type="ChEBI" id="CHEBI:18420"/>
    </ligand>
</feature>
<feature type="binding site" evidence="1">
    <location>
        <position position="203"/>
    </location>
    <ligand>
        <name>Mg(2+)</name>
        <dbReference type="ChEBI" id="CHEBI:18420"/>
    </ligand>
</feature>
<feature type="binding site" evidence="6 11">
    <location>
        <position position="204"/>
    </location>
    <ligand>
        <name>D-ribulose 1,5-bisphosphate</name>
        <dbReference type="ChEBI" id="CHEBI:57870"/>
    </ligand>
</feature>
<feature type="binding site" evidence="1">
    <location>
        <position position="204"/>
    </location>
    <ligand>
        <name>Mg(2+)</name>
        <dbReference type="ChEBI" id="CHEBI:18420"/>
    </ligand>
</feature>
<feature type="binding site" evidence="6 11">
    <location>
        <position position="295"/>
    </location>
    <ligand>
        <name>D-ribulose 1,5-bisphosphate</name>
        <dbReference type="ChEBI" id="CHEBI:57870"/>
    </ligand>
</feature>
<feature type="binding site" evidence="6 11">
    <location>
        <position position="327"/>
    </location>
    <ligand>
        <name>D-ribulose 1,5-bisphosphate</name>
        <dbReference type="ChEBI" id="CHEBI:57870"/>
    </ligand>
</feature>
<feature type="binding site" evidence="6 11">
    <location>
        <position position="334"/>
    </location>
    <ligand>
        <name>D-ribulose 1,5-bisphosphate</name>
        <dbReference type="ChEBI" id="CHEBI:57870"/>
    </ligand>
</feature>
<feature type="binding site" evidence="6 11">
    <location>
        <position position="379"/>
    </location>
    <ligand>
        <name>D-ribulose 1,5-bisphosphate</name>
        <dbReference type="ChEBI" id="CHEBI:57870"/>
    </ligand>
</feature>
<feature type="binding site" evidence="6 11">
    <location>
        <position position="381"/>
    </location>
    <ligand>
        <name>D-ribulose 1,5-bisphosphate</name>
        <dbReference type="ChEBI" id="CHEBI:57870"/>
    </ligand>
</feature>
<feature type="binding site" evidence="6 11">
    <location>
        <position position="403"/>
    </location>
    <ligand>
        <name>D-ribulose 1,5-bisphosphate</name>
        <dbReference type="ChEBI" id="CHEBI:57870"/>
    </ligand>
</feature>
<feature type="binding site" evidence="6 11">
    <location>
        <position position="404"/>
    </location>
    <ligand>
        <name>D-ribulose 1,5-bisphosphate</name>
        <dbReference type="ChEBI" id="CHEBI:57870"/>
    </ligand>
</feature>
<feature type="site" description="Transition state stabilizer" evidence="1">
    <location>
        <position position="334"/>
    </location>
</feature>
<feature type="modified residue" description="N-acetylproline" evidence="4">
    <location>
        <position position="3"/>
    </location>
</feature>
<feature type="modified residue" description="N6,N6,N6-trimethyllysine" evidence="4">
    <location>
        <position position="14"/>
    </location>
</feature>
<feature type="modified residue" description="N6-carboxylysine" evidence="1">
    <location>
        <position position="201"/>
    </location>
</feature>
<feature type="disulfide bond" description="Interchain; in linked form" evidence="1 11">
    <location>
        <position position="247"/>
    </location>
</feature>
<feature type="helix" evidence="13">
    <location>
        <begin position="21"/>
        <end position="24"/>
    </location>
</feature>
<feature type="strand" evidence="13">
    <location>
        <begin position="36"/>
        <end position="44"/>
    </location>
</feature>
<feature type="helix" evidence="13">
    <location>
        <begin position="50"/>
        <end position="60"/>
    </location>
</feature>
<feature type="turn" evidence="13">
    <location>
        <begin position="61"/>
        <end position="63"/>
    </location>
</feature>
<feature type="strand" evidence="12">
    <location>
        <begin position="66"/>
        <end position="68"/>
    </location>
</feature>
<feature type="helix" evidence="13">
    <location>
        <begin position="70"/>
        <end position="74"/>
    </location>
</feature>
<feature type="helix" evidence="13">
    <location>
        <begin position="77"/>
        <end position="80"/>
    </location>
</feature>
<feature type="strand" evidence="13">
    <location>
        <begin position="83"/>
        <end position="89"/>
    </location>
</feature>
<feature type="strand" evidence="13">
    <location>
        <begin position="91"/>
        <end position="94"/>
    </location>
</feature>
<feature type="strand" evidence="13">
    <location>
        <begin position="97"/>
        <end position="103"/>
    </location>
</feature>
<feature type="helix" evidence="13">
    <location>
        <begin position="105"/>
        <end position="107"/>
    </location>
</feature>
<feature type="helix" evidence="13">
    <location>
        <begin position="113"/>
        <end position="121"/>
    </location>
</feature>
<feature type="helix" evidence="13">
    <location>
        <begin position="124"/>
        <end position="126"/>
    </location>
</feature>
<feature type="strand" evidence="13">
    <location>
        <begin position="130"/>
        <end position="139"/>
    </location>
</feature>
<feature type="helix" evidence="13">
    <location>
        <begin position="142"/>
        <end position="145"/>
    </location>
</feature>
<feature type="strand" evidence="12">
    <location>
        <begin position="151"/>
        <end position="153"/>
    </location>
</feature>
<feature type="helix" evidence="13">
    <location>
        <begin position="155"/>
        <end position="162"/>
    </location>
</feature>
<feature type="strand" evidence="13">
    <location>
        <begin position="169"/>
        <end position="171"/>
    </location>
</feature>
<feature type="strand" evidence="13">
    <location>
        <begin position="175"/>
        <end position="178"/>
    </location>
</feature>
<feature type="helix" evidence="13">
    <location>
        <begin position="182"/>
        <end position="194"/>
    </location>
</feature>
<feature type="strand" evidence="13">
    <location>
        <begin position="198"/>
        <end position="201"/>
    </location>
</feature>
<feature type="strand" evidence="13">
    <location>
        <begin position="207"/>
        <end position="209"/>
    </location>
</feature>
<feature type="helix" evidence="13">
    <location>
        <begin position="214"/>
        <end position="232"/>
    </location>
</feature>
<feature type="strand" evidence="13">
    <location>
        <begin position="237"/>
        <end position="241"/>
    </location>
</feature>
<feature type="helix" evidence="13">
    <location>
        <begin position="247"/>
        <end position="260"/>
    </location>
</feature>
<feature type="strand" evidence="13">
    <location>
        <begin position="263"/>
        <end position="268"/>
    </location>
</feature>
<feature type="helix" evidence="13">
    <location>
        <begin position="269"/>
        <end position="272"/>
    </location>
</feature>
<feature type="helix" evidence="13">
    <location>
        <begin position="274"/>
        <end position="287"/>
    </location>
</feature>
<feature type="strand" evidence="13">
    <location>
        <begin position="290"/>
        <end position="294"/>
    </location>
</feature>
<feature type="helix" evidence="13">
    <location>
        <begin position="298"/>
        <end position="302"/>
    </location>
</feature>
<feature type="strand" evidence="13">
    <location>
        <begin position="305"/>
        <end position="309"/>
    </location>
</feature>
<feature type="helix" evidence="13">
    <location>
        <begin position="311"/>
        <end position="321"/>
    </location>
</feature>
<feature type="strand" evidence="13">
    <location>
        <begin position="324"/>
        <end position="327"/>
    </location>
</feature>
<feature type="strand" evidence="13">
    <location>
        <begin position="331"/>
        <end position="335"/>
    </location>
</feature>
<feature type="helix" evidence="13">
    <location>
        <begin position="339"/>
        <end position="350"/>
    </location>
</feature>
<feature type="strand" evidence="13">
    <location>
        <begin position="352"/>
        <end position="354"/>
    </location>
</feature>
<feature type="helix" evidence="13">
    <location>
        <begin position="358"/>
        <end position="360"/>
    </location>
</feature>
<feature type="strand" evidence="13">
    <location>
        <begin position="375"/>
        <end position="381"/>
    </location>
</feature>
<feature type="helix" evidence="13">
    <location>
        <begin position="384"/>
        <end position="386"/>
    </location>
</feature>
<feature type="helix" evidence="13">
    <location>
        <begin position="387"/>
        <end position="394"/>
    </location>
</feature>
<feature type="strand" evidence="13">
    <location>
        <begin position="399"/>
        <end position="401"/>
    </location>
</feature>
<feature type="helix" evidence="13">
    <location>
        <begin position="404"/>
        <end position="407"/>
    </location>
</feature>
<feature type="helix" evidence="13">
    <location>
        <begin position="413"/>
        <end position="432"/>
    </location>
</feature>
<feature type="helix" evidence="13">
    <location>
        <begin position="437"/>
        <end position="448"/>
    </location>
</feature>
<feature type="turn" evidence="13">
    <location>
        <begin position="449"/>
        <end position="451"/>
    </location>
</feature>
<feature type="helix" evidence="13">
    <location>
        <begin position="453"/>
        <end position="462"/>
    </location>
</feature>
<proteinExistence type="evidence at protein level"/>
<evidence type="ECO:0000250" key="1"/>
<evidence type="ECO:0000250" key="2">
    <source>
        <dbReference type="UniProtKB" id="P11383"/>
    </source>
</evidence>
<evidence type="ECO:0000255" key="3">
    <source>
        <dbReference type="HAMAP-Rule" id="MF_01338"/>
    </source>
</evidence>
<evidence type="ECO:0000269" key="4">
    <source>
    </source>
</evidence>
<evidence type="ECO:0000269" key="5">
    <source>
    </source>
</evidence>
<evidence type="ECO:0000269" key="6">
    <source>
    </source>
</evidence>
<evidence type="ECO:0000305" key="7"/>
<evidence type="ECO:0000305" key="8">
    <source>
    </source>
</evidence>
<evidence type="ECO:0000305" key="9">
    <source>
    </source>
</evidence>
<evidence type="ECO:0007744" key="10">
    <source>
        <dbReference type="PDB" id="4HHH"/>
    </source>
</evidence>
<evidence type="ECO:0007744" key="11">
    <source>
        <dbReference type="PDB" id="4MKV"/>
    </source>
</evidence>
<evidence type="ECO:0007829" key="12">
    <source>
        <dbReference type="PDB" id="4HHH"/>
    </source>
</evidence>
<evidence type="ECO:0007829" key="13">
    <source>
        <dbReference type="PDB" id="4MKV"/>
    </source>
</evidence>
<sequence>MSPQTETKAKVGFKAGVKDYKLTYYTPDYQTKDTDILAAFRVTPQPGVPPEEAGAAVAAESSTGTWTTVWTDGLTSLDRYKGRCYEIEPVPGEDNQFIAYVAYPLDLFEEGSVTNMFTSIVGNVFGFKALRALRLEDLRIPYAYVKTFQGPPHGIQVERDKLNKYGRPLLGCTIKPKLGLSAKNYGRAVYECLRGGLDFTKDDENVNSQPFMRWRDRFLFCAEAIYKSQAETGEIKGHYLNATAGTCEEMLKRAVFARELGVPIVMHDYLTGGFTANTTLSHYCRDNGLLLHIHRAMHAVIDRQKNHGMHFRVLAKALRLSGGDHIHAGTVVGKLEGEREITLGFVDLLRDDYIKKDRSRGIYFTQDWVSLPGVIPVASGGIHVWHMPALTEIFGDDSVLQFGGGTLGHPWGNAPGAVANRVALEACVQARNEGRDLAREGNAIIREACKWSPELAAACEVWKEIKFEFPAMDTL</sequence>